<dbReference type="EC" id="3.6.1.41" evidence="1"/>
<dbReference type="EMBL" id="CP000284">
    <property type="protein sequence ID" value="ABE48737.1"/>
    <property type="molecule type" value="Genomic_DNA"/>
</dbReference>
<dbReference type="RefSeq" id="WP_011478834.1">
    <property type="nucleotide sequence ID" value="NC_007947.1"/>
</dbReference>
<dbReference type="SMR" id="Q1H450"/>
<dbReference type="STRING" id="265072.Mfla_0467"/>
<dbReference type="KEGG" id="mfa:Mfla_0467"/>
<dbReference type="eggNOG" id="COG0639">
    <property type="taxonomic scope" value="Bacteria"/>
</dbReference>
<dbReference type="HOGENOM" id="CLU_056184_2_0_4"/>
<dbReference type="OrthoDB" id="9807890at2"/>
<dbReference type="Proteomes" id="UP000002440">
    <property type="component" value="Chromosome"/>
</dbReference>
<dbReference type="GO" id="GO:0008803">
    <property type="term" value="F:bis(5'-nucleosyl)-tetraphosphatase (symmetrical) activity"/>
    <property type="evidence" value="ECO:0007669"/>
    <property type="project" value="UniProtKB-UniRule"/>
</dbReference>
<dbReference type="CDD" id="cd07422">
    <property type="entry name" value="MPP_ApaH"/>
    <property type="match status" value="1"/>
</dbReference>
<dbReference type="Gene3D" id="3.60.21.10">
    <property type="match status" value="1"/>
</dbReference>
<dbReference type="HAMAP" id="MF_00199">
    <property type="entry name" value="ApaH"/>
    <property type="match status" value="1"/>
</dbReference>
<dbReference type="InterPro" id="IPR004617">
    <property type="entry name" value="ApaH"/>
</dbReference>
<dbReference type="InterPro" id="IPR004843">
    <property type="entry name" value="Calcineurin-like_PHP_ApaH"/>
</dbReference>
<dbReference type="InterPro" id="IPR029052">
    <property type="entry name" value="Metallo-depent_PP-like"/>
</dbReference>
<dbReference type="NCBIfam" id="TIGR00668">
    <property type="entry name" value="apaH"/>
    <property type="match status" value="1"/>
</dbReference>
<dbReference type="NCBIfam" id="NF001204">
    <property type="entry name" value="PRK00166.1"/>
    <property type="match status" value="1"/>
</dbReference>
<dbReference type="PANTHER" id="PTHR40942">
    <property type="match status" value="1"/>
</dbReference>
<dbReference type="PANTHER" id="PTHR40942:SF4">
    <property type="entry name" value="CYTOCHROME C5"/>
    <property type="match status" value="1"/>
</dbReference>
<dbReference type="Pfam" id="PF00149">
    <property type="entry name" value="Metallophos"/>
    <property type="match status" value="1"/>
</dbReference>
<dbReference type="PIRSF" id="PIRSF000903">
    <property type="entry name" value="B5n-ttraPtase_sm"/>
    <property type="match status" value="1"/>
</dbReference>
<dbReference type="SUPFAM" id="SSF56300">
    <property type="entry name" value="Metallo-dependent phosphatases"/>
    <property type="match status" value="1"/>
</dbReference>
<protein>
    <recommendedName>
        <fullName evidence="1">Bis(5'-nucleosyl)-tetraphosphatase, symmetrical</fullName>
        <ecNumber evidence="1">3.6.1.41</ecNumber>
    </recommendedName>
    <alternativeName>
        <fullName evidence="1">Ap4A hydrolase</fullName>
    </alternativeName>
    <alternativeName>
        <fullName evidence="1">Diadenosine 5',5'''-P1,P4-tetraphosphate pyrophosphohydrolase</fullName>
    </alternativeName>
    <alternativeName>
        <fullName evidence="1">Diadenosine tetraphosphatase</fullName>
    </alternativeName>
</protein>
<accession>Q1H450</accession>
<evidence type="ECO:0000255" key="1">
    <source>
        <dbReference type="HAMAP-Rule" id="MF_00199"/>
    </source>
</evidence>
<comment type="function">
    <text evidence="1">Hydrolyzes diadenosine 5',5'''-P1,P4-tetraphosphate to yield ADP.</text>
</comment>
<comment type="catalytic activity">
    <reaction evidence="1">
        <text>P(1),P(4)-bis(5'-adenosyl) tetraphosphate + H2O = 2 ADP + 2 H(+)</text>
        <dbReference type="Rhea" id="RHEA:24252"/>
        <dbReference type="ChEBI" id="CHEBI:15377"/>
        <dbReference type="ChEBI" id="CHEBI:15378"/>
        <dbReference type="ChEBI" id="CHEBI:58141"/>
        <dbReference type="ChEBI" id="CHEBI:456216"/>
        <dbReference type="EC" id="3.6.1.41"/>
    </reaction>
</comment>
<comment type="similarity">
    <text evidence="1">Belongs to the Ap4A hydrolase family.</text>
</comment>
<name>APAH_METFK</name>
<reference key="1">
    <citation type="submission" date="2006-03" db="EMBL/GenBank/DDBJ databases">
        <title>Complete sequence of Methylobacillus flagellatus KT.</title>
        <authorList>
            <consortium name="US DOE Joint Genome Institute"/>
            <person name="Copeland A."/>
            <person name="Lucas S."/>
            <person name="Lapidus A."/>
            <person name="Barry K."/>
            <person name="Detter J.C."/>
            <person name="Glavina del Rio T."/>
            <person name="Hammon N."/>
            <person name="Israni S."/>
            <person name="Dalin E."/>
            <person name="Tice H."/>
            <person name="Pitluck S."/>
            <person name="Brettin T."/>
            <person name="Bruce D."/>
            <person name="Han C."/>
            <person name="Tapia R."/>
            <person name="Saunders E."/>
            <person name="Gilna P."/>
            <person name="Schmutz J."/>
            <person name="Larimer F."/>
            <person name="Land M."/>
            <person name="Kyrpides N."/>
            <person name="Anderson I."/>
            <person name="Richardson P."/>
        </authorList>
    </citation>
    <scope>NUCLEOTIDE SEQUENCE [LARGE SCALE GENOMIC DNA]</scope>
    <source>
        <strain>ATCC 51484 / DSM 6875 / VKM B-1610 / KT</strain>
    </source>
</reference>
<sequence length="277" mass="31014">MATYAIGDIQGCYHSLLSLLELIQFDPVKDKLWLVGDLINRGPGSLETLRWAKSHESSLVMVLGNHDLHALAVAEGYVRAHRSDTLQSIFDAPDRDELLEWLRFRPMMHAEDGMVLVHAGLLPQWSAEQALHLGQEVERALRGDDYHGFLAHMYGNYPVRWEAGLQGMDRLRMITNAMTRLRVCTPDGAMDFDFKGKLADIPPGKMPWFDVPERGSADVTVIFGHWSALGLQQRDNLYALDTGCLWGGKLTALRLEGRQIFQVPCHPADGVRAINGS</sequence>
<proteinExistence type="inferred from homology"/>
<keyword id="KW-0378">Hydrolase</keyword>
<keyword id="KW-1185">Reference proteome</keyword>
<gene>
    <name evidence="1" type="primary">apaH</name>
    <name type="ordered locus">Mfla_0467</name>
</gene>
<organism>
    <name type="scientific">Methylobacillus flagellatus (strain ATCC 51484 / DSM 6875 / VKM B-1610 / KT)</name>
    <dbReference type="NCBI Taxonomy" id="265072"/>
    <lineage>
        <taxon>Bacteria</taxon>
        <taxon>Pseudomonadati</taxon>
        <taxon>Pseudomonadota</taxon>
        <taxon>Betaproteobacteria</taxon>
        <taxon>Nitrosomonadales</taxon>
        <taxon>Methylophilaceae</taxon>
        <taxon>Methylobacillus</taxon>
    </lineage>
</organism>
<feature type="chain" id="PRO_1000012070" description="Bis(5'-nucleosyl)-tetraphosphatase, symmetrical">
    <location>
        <begin position="1"/>
        <end position="277"/>
    </location>
</feature>